<keyword id="KW-0067">ATP-binding</keyword>
<keyword id="KW-0436">Ligase</keyword>
<keyword id="KW-0460">Magnesium</keyword>
<keyword id="KW-0479">Metal-binding</keyword>
<keyword id="KW-0547">Nucleotide-binding</keyword>
<keyword id="KW-1185">Reference proteome</keyword>
<keyword id="KW-0816">Tricarboxylic acid cycle</keyword>
<protein>
    <recommendedName>
        <fullName evidence="1">Succinate--CoA ligase [ADP-forming] subunit beta</fullName>
        <ecNumber evidence="1">6.2.1.5</ecNumber>
    </recommendedName>
    <alternativeName>
        <fullName evidence="1">Succinyl-CoA synthetase subunit beta</fullName>
        <shortName evidence="1">SCS-beta</shortName>
    </alternativeName>
</protein>
<organism>
    <name type="scientific">Stenotrophomonas maltophilia (strain K279a)</name>
    <dbReference type="NCBI Taxonomy" id="522373"/>
    <lineage>
        <taxon>Bacteria</taxon>
        <taxon>Pseudomonadati</taxon>
        <taxon>Pseudomonadota</taxon>
        <taxon>Gammaproteobacteria</taxon>
        <taxon>Lysobacterales</taxon>
        <taxon>Lysobacteraceae</taxon>
        <taxon>Stenotrophomonas</taxon>
        <taxon>Stenotrophomonas maltophilia group</taxon>
    </lineage>
</organism>
<sequence length="389" mass="41249">MNFHEYQSKQLLAEYGIPVPAGKVAATPDEAVAAANSLGQGPWMVKAQIHAGGRGKAGGVKFCKTTDDVKAAAAKMLGTKMATYQTAGVELPVNLVLVTTAGEIVKELYLSVLVDRGTKTITYIASSEGGVEIEQVAAETPELIHSLNVDFVEGVQGYHGRDFGFKLGLTAKQAGQFASIMVNLYRLFNEKDLALVEINPLAILDDGNLYALDGKFDSDDNAAFRQKALVAMRDKTQEDPTEVIASELDINYVTMDGNIGCMVNGAGLAMATMDVIKLNGGEPANFLDVGGGANKQRVIEAFKLILSSDKVEGIFVNIFGGIVRCDMIAEGIIAAVKEVGVKVPVVVRLEGTNVEEGKQLLRDSGMAIIPADNINDGAKKIVEAVKNAA</sequence>
<comment type="function">
    <text evidence="1">Succinyl-CoA synthetase functions in the citric acid cycle (TCA), coupling the hydrolysis of succinyl-CoA to the synthesis of either ATP or GTP and thus represents the only step of substrate-level phosphorylation in the TCA. The beta subunit provides nucleotide specificity of the enzyme and binds the substrate succinate, while the binding sites for coenzyme A and phosphate are found in the alpha subunit.</text>
</comment>
<comment type="catalytic activity">
    <reaction evidence="1">
        <text>succinate + ATP + CoA = succinyl-CoA + ADP + phosphate</text>
        <dbReference type="Rhea" id="RHEA:17661"/>
        <dbReference type="ChEBI" id="CHEBI:30031"/>
        <dbReference type="ChEBI" id="CHEBI:30616"/>
        <dbReference type="ChEBI" id="CHEBI:43474"/>
        <dbReference type="ChEBI" id="CHEBI:57287"/>
        <dbReference type="ChEBI" id="CHEBI:57292"/>
        <dbReference type="ChEBI" id="CHEBI:456216"/>
        <dbReference type="EC" id="6.2.1.5"/>
    </reaction>
    <physiologicalReaction direction="right-to-left" evidence="1">
        <dbReference type="Rhea" id="RHEA:17663"/>
    </physiologicalReaction>
</comment>
<comment type="catalytic activity">
    <reaction evidence="1">
        <text>GTP + succinate + CoA = succinyl-CoA + GDP + phosphate</text>
        <dbReference type="Rhea" id="RHEA:22120"/>
        <dbReference type="ChEBI" id="CHEBI:30031"/>
        <dbReference type="ChEBI" id="CHEBI:37565"/>
        <dbReference type="ChEBI" id="CHEBI:43474"/>
        <dbReference type="ChEBI" id="CHEBI:57287"/>
        <dbReference type="ChEBI" id="CHEBI:57292"/>
        <dbReference type="ChEBI" id="CHEBI:58189"/>
    </reaction>
    <physiologicalReaction direction="right-to-left" evidence="1">
        <dbReference type="Rhea" id="RHEA:22122"/>
    </physiologicalReaction>
</comment>
<comment type="cofactor">
    <cofactor evidence="1">
        <name>Mg(2+)</name>
        <dbReference type="ChEBI" id="CHEBI:18420"/>
    </cofactor>
    <text evidence="1">Binds 1 Mg(2+) ion per subunit.</text>
</comment>
<comment type="pathway">
    <text evidence="1">Carbohydrate metabolism; tricarboxylic acid cycle; succinate from succinyl-CoA (ligase route): step 1/1.</text>
</comment>
<comment type="subunit">
    <text evidence="1">Heterotetramer of two alpha and two beta subunits.</text>
</comment>
<comment type="similarity">
    <text evidence="1">Belongs to the succinate/malate CoA ligase beta subunit family.</text>
</comment>
<proteinExistence type="inferred from homology"/>
<gene>
    <name evidence="1" type="primary">sucC</name>
    <name type="ordered locus">Smlt3753</name>
</gene>
<feature type="chain" id="PRO_1000129233" description="Succinate--CoA ligase [ADP-forming] subunit beta">
    <location>
        <begin position="1"/>
        <end position="389"/>
    </location>
</feature>
<feature type="domain" description="ATP-grasp" evidence="1">
    <location>
        <begin position="9"/>
        <end position="244"/>
    </location>
</feature>
<feature type="binding site" evidence="1">
    <location>
        <position position="46"/>
    </location>
    <ligand>
        <name>ATP</name>
        <dbReference type="ChEBI" id="CHEBI:30616"/>
    </ligand>
</feature>
<feature type="binding site" evidence="1">
    <location>
        <begin position="53"/>
        <end position="55"/>
    </location>
    <ligand>
        <name>ATP</name>
        <dbReference type="ChEBI" id="CHEBI:30616"/>
    </ligand>
</feature>
<feature type="binding site" evidence="1">
    <location>
        <position position="102"/>
    </location>
    <ligand>
        <name>ATP</name>
        <dbReference type="ChEBI" id="CHEBI:30616"/>
    </ligand>
</feature>
<feature type="binding site" evidence="1">
    <location>
        <position position="107"/>
    </location>
    <ligand>
        <name>ATP</name>
        <dbReference type="ChEBI" id="CHEBI:30616"/>
    </ligand>
</feature>
<feature type="binding site" evidence="1">
    <location>
        <position position="199"/>
    </location>
    <ligand>
        <name>Mg(2+)</name>
        <dbReference type="ChEBI" id="CHEBI:18420"/>
    </ligand>
</feature>
<feature type="binding site" evidence="1">
    <location>
        <position position="213"/>
    </location>
    <ligand>
        <name>Mg(2+)</name>
        <dbReference type="ChEBI" id="CHEBI:18420"/>
    </ligand>
</feature>
<feature type="binding site" evidence="1">
    <location>
        <position position="264"/>
    </location>
    <ligand>
        <name>substrate</name>
        <note>ligand shared with subunit alpha</note>
    </ligand>
</feature>
<feature type="binding site" evidence="1">
    <location>
        <begin position="321"/>
        <end position="323"/>
    </location>
    <ligand>
        <name>substrate</name>
        <note>ligand shared with subunit alpha</note>
    </ligand>
</feature>
<name>SUCC_STRMK</name>
<reference key="1">
    <citation type="journal article" date="2008" name="Genome Biol.">
        <title>The complete genome, comparative and functional analysis of Stenotrophomonas maltophilia reveals an organism heavily shielded by drug resistance determinants.</title>
        <authorList>
            <person name="Crossman L.C."/>
            <person name="Gould V.C."/>
            <person name="Dow J.M."/>
            <person name="Vernikos G.S."/>
            <person name="Okazaki A."/>
            <person name="Sebaihia M."/>
            <person name="Saunders D."/>
            <person name="Arrowsmith C."/>
            <person name="Carver T."/>
            <person name="Peters N."/>
            <person name="Adlem E."/>
            <person name="Kerhornou A."/>
            <person name="Lord A."/>
            <person name="Murphy L."/>
            <person name="Seeger K."/>
            <person name="Squares R."/>
            <person name="Rutter S."/>
            <person name="Quail M.A."/>
            <person name="Rajandream M.A."/>
            <person name="Harris D."/>
            <person name="Churcher C."/>
            <person name="Bentley S.D."/>
            <person name="Parkhill J."/>
            <person name="Thomson N.R."/>
            <person name="Avison M.B."/>
        </authorList>
    </citation>
    <scope>NUCLEOTIDE SEQUENCE [LARGE SCALE GENOMIC DNA]</scope>
    <source>
        <strain>K279a</strain>
    </source>
</reference>
<dbReference type="EC" id="6.2.1.5" evidence="1"/>
<dbReference type="EMBL" id="AM743169">
    <property type="protein sequence ID" value="CAQ47163.1"/>
    <property type="molecule type" value="Genomic_DNA"/>
</dbReference>
<dbReference type="RefSeq" id="WP_004154430.1">
    <property type="nucleotide sequence ID" value="NC_010943.1"/>
</dbReference>
<dbReference type="SMR" id="B2FRS3"/>
<dbReference type="EnsemblBacteria" id="CAQ47163">
    <property type="protein sequence ID" value="CAQ47163"/>
    <property type="gene ID" value="Smlt3753"/>
</dbReference>
<dbReference type="GeneID" id="93742366"/>
<dbReference type="KEGG" id="sml:Smlt3753"/>
<dbReference type="eggNOG" id="COG0045">
    <property type="taxonomic scope" value="Bacteria"/>
</dbReference>
<dbReference type="HOGENOM" id="CLU_037430_0_2_6"/>
<dbReference type="UniPathway" id="UPA00223">
    <property type="reaction ID" value="UER00999"/>
</dbReference>
<dbReference type="Proteomes" id="UP000008840">
    <property type="component" value="Chromosome"/>
</dbReference>
<dbReference type="GO" id="GO:0042709">
    <property type="term" value="C:succinate-CoA ligase complex"/>
    <property type="evidence" value="ECO:0007669"/>
    <property type="project" value="TreeGrafter"/>
</dbReference>
<dbReference type="GO" id="GO:0005524">
    <property type="term" value="F:ATP binding"/>
    <property type="evidence" value="ECO:0007669"/>
    <property type="project" value="UniProtKB-UniRule"/>
</dbReference>
<dbReference type="GO" id="GO:0000287">
    <property type="term" value="F:magnesium ion binding"/>
    <property type="evidence" value="ECO:0007669"/>
    <property type="project" value="UniProtKB-UniRule"/>
</dbReference>
<dbReference type="GO" id="GO:0004775">
    <property type="term" value="F:succinate-CoA ligase (ADP-forming) activity"/>
    <property type="evidence" value="ECO:0007669"/>
    <property type="project" value="UniProtKB-UniRule"/>
</dbReference>
<dbReference type="GO" id="GO:0004776">
    <property type="term" value="F:succinate-CoA ligase (GDP-forming) activity"/>
    <property type="evidence" value="ECO:0007669"/>
    <property type="project" value="RHEA"/>
</dbReference>
<dbReference type="GO" id="GO:0006104">
    <property type="term" value="P:succinyl-CoA metabolic process"/>
    <property type="evidence" value="ECO:0007669"/>
    <property type="project" value="TreeGrafter"/>
</dbReference>
<dbReference type="GO" id="GO:0006099">
    <property type="term" value="P:tricarboxylic acid cycle"/>
    <property type="evidence" value="ECO:0007669"/>
    <property type="project" value="UniProtKB-UniRule"/>
</dbReference>
<dbReference type="FunFam" id="3.30.1490.20:FF:000002">
    <property type="entry name" value="Succinate--CoA ligase [ADP-forming] subunit beta"/>
    <property type="match status" value="1"/>
</dbReference>
<dbReference type="FunFam" id="3.30.470.20:FF:000002">
    <property type="entry name" value="Succinate--CoA ligase [ADP-forming] subunit beta"/>
    <property type="match status" value="1"/>
</dbReference>
<dbReference type="FunFam" id="3.40.50.261:FF:000001">
    <property type="entry name" value="Succinate--CoA ligase [ADP-forming] subunit beta"/>
    <property type="match status" value="1"/>
</dbReference>
<dbReference type="Gene3D" id="3.30.1490.20">
    <property type="entry name" value="ATP-grasp fold, A domain"/>
    <property type="match status" value="1"/>
</dbReference>
<dbReference type="Gene3D" id="3.30.470.20">
    <property type="entry name" value="ATP-grasp fold, B domain"/>
    <property type="match status" value="1"/>
</dbReference>
<dbReference type="Gene3D" id="3.40.50.261">
    <property type="entry name" value="Succinyl-CoA synthetase domains"/>
    <property type="match status" value="1"/>
</dbReference>
<dbReference type="HAMAP" id="MF_00558">
    <property type="entry name" value="Succ_CoA_beta"/>
    <property type="match status" value="1"/>
</dbReference>
<dbReference type="InterPro" id="IPR011761">
    <property type="entry name" value="ATP-grasp"/>
</dbReference>
<dbReference type="InterPro" id="IPR013650">
    <property type="entry name" value="ATP-grasp_succ-CoA_synth-type"/>
</dbReference>
<dbReference type="InterPro" id="IPR013815">
    <property type="entry name" value="ATP_grasp_subdomain_1"/>
</dbReference>
<dbReference type="InterPro" id="IPR017866">
    <property type="entry name" value="Succ-CoA_synthase_bsu_CS"/>
</dbReference>
<dbReference type="InterPro" id="IPR005811">
    <property type="entry name" value="SUCC_ACL_C"/>
</dbReference>
<dbReference type="InterPro" id="IPR005809">
    <property type="entry name" value="Succ_CoA_ligase-like_bsu"/>
</dbReference>
<dbReference type="InterPro" id="IPR016102">
    <property type="entry name" value="Succinyl-CoA_synth-like"/>
</dbReference>
<dbReference type="NCBIfam" id="NF001913">
    <property type="entry name" value="PRK00696.1"/>
    <property type="match status" value="1"/>
</dbReference>
<dbReference type="NCBIfam" id="TIGR01016">
    <property type="entry name" value="sucCoAbeta"/>
    <property type="match status" value="1"/>
</dbReference>
<dbReference type="PANTHER" id="PTHR11815:SF10">
    <property type="entry name" value="SUCCINATE--COA LIGASE [GDP-FORMING] SUBUNIT BETA, MITOCHONDRIAL"/>
    <property type="match status" value="1"/>
</dbReference>
<dbReference type="PANTHER" id="PTHR11815">
    <property type="entry name" value="SUCCINYL-COA SYNTHETASE BETA CHAIN"/>
    <property type="match status" value="1"/>
</dbReference>
<dbReference type="Pfam" id="PF08442">
    <property type="entry name" value="ATP-grasp_2"/>
    <property type="match status" value="1"/>
</dbReference>
<dbReference type="Pfam" id="PF00549">
    <property type="entry name" value="Ligase_CoA"/>
    <property type="match status" value="1"/>
</dbReference>
<dbReference type="PIRSF" id="PIRSF001554">
    <property type="entry name" value="SucCS_beta"/>
    <property type="match status" value="1"/>
</dbReference>
<dbReference type="SUPFAM" id="SSF56059">
    <property type="entry name" value="Glutathione synthetase ATP-binding domain-like"/>
    <property type="match status" value="1"/>
</dbReference>
<dbReference type="SUPFAM" id="SSF52210">
    <property type="entry name" value="Succinyl-CoA synthetase domains"/>
    <property type="match status" value="1"/>
</dbReference>
<dbReference type="PROSITE" id="PS50975">
    <property type="entry name" value="ATP_GRASP"/>
    <property type="match status" value="1"/>
</dbReference>
<dbReference type="PROSITE" id="PS01217">
    <property type="entry name" value="SUCCINYL_COA_LIG_3"/>
    <property type="match status" value="1"/>
</dbReference>
<accession>B2FRS3</accession>
<evidence type="ECO:0000255" key="1">
    <source>
        <dbReference type="HAMAP-Rule" id="MF_00558"/>
    </source>
</evidence>